<organism>
    <name type="scientific">Escherichia fergusonii (strain ATCC 35469 / DSM 13698 / CCUG 18766 / IAM 14443 / JCM 21226 / LMG 7866 / NBRC 102419 / NCTC 12128 / CDC 0568-73)</name>
    <dbReference type="NCBI Taxonomy" id="585054"/>
    <lineage>
        <taxon>Bacteria</taxon>
        <taxon>Pseudomonadati</taxon>
        <taxon>Pseudomonadota</taxon>
        <taxon>Gammaproteobacteria</taxon>
        <taxon>Enterobacterales</taxon>
        <taxon>Enterobacteriaceae</taxon>
        <taxon>Escherichia</taxon>
    </lineage>
</organism>
<sequence length="704" mass="77581">MARTTPIARYRNIGISAHIDAGKTTTTERILFYTGVNHKIGEVHDGAATMDWMEQEQERGITITSAATTAFWSGMAKQYEPHRINIIDTPGHVDFTIEVERSMRVLDGAVMVYCAVGGVQPQSETVWRQANKYKVPRIAFVNKMDRMGANFLKVVNQIKTRLGANPVPLQLAIGAEEHFTGVVDLVKMKAINWNDADQGVTFEYEDIPADMVELANEWHQNLIESAAEASEELMEKYLGGEELTEAEIKGALRQRVLNNEIILVTCGSAFKNKGVQAMLDAVIDYLPSPVDVPAINGILDDGKDTPAERHASDDEPFSALAFKIATDPFVGNLTFFRVYSGVVNSGDTVLNSVKAARERFGRIVQMHANKREEIKEVRAGDIAAAIGLKDVTTGDTLCDPDAPIILERMEFPEPVISIAVEPKTKADQEKMGLALGRLAKEDPSFRVWTDEESNQTIIAGMGELHLDIIVDRMKREFNVEANVGKPQVAYRETIRQKVTDVEGKHAKQSGGRGQYGHVVIDMYPLEPGSNPKGYEFINDIKGGVIPGEYIPAVDKGIQEQLKAGPLAGYPVVDMGIRLHFGSYHDVDSSELAFKLAASIAFKEGFKKAKPVLLEPIMKVEVETPEENTGDVIGDLSRRRGMLKGQESEVTGVKIHAEVPLSEMFGYATQLRSLTKGRASYTMEFLKYDEAPSNVAQAVIEARGK</sequence>
<proteinExistence type="inferred from homology"/>
<dbReference type="EMBL" id="CU928158">
    <property type="protein sequence ID" value="CAQ90789.1"/>
    <property type="molecule type" value="Genomic_DNA"/>
</dbReference>
<dbReference type="RefSeq" id="WP_000124700.1">
    <property type="nucleotide sequence ID" value="NC_011740.1"/>
</dbReference>
<dbReference type="SMR" id="B7LS46"/>
<dbReference type="GeneID" id="93778658"/>
<dbReference type="KEGG" id="efe:EFER_3310"/>
<dbReference type="HOGENOM" id="CLU_002794_4_1_6"/>
<dbReference type="OrthoDB" id="9804431at2"/>
<dbReference type="Proteomes" id="UP000000745">
    <property type="component" value="Chromosome"/>
</dbReference>
<dbReference type="GO" id="GO:0005737">
    <property type="term" value="C:cytoplasm"/>
    <property type="evidence" value="ECO:0007669"/>
    <property type="project" value="UniProtKB-SubCell"/>
</dbReference>
<dbReference type="GO" id="GO:0005525">
    <property type="term" value="F:GTP binding"/>
    <property type="evidence" value="ECO:0007669"/>
    <property type="project" value="UniProtKB-UniRule"/>
</dbReference>
<dbReference type="GO" id="GO:0003924">
    <property type="term" value="F:GTPase activity"/>
    <property type="evidence" value="ECO:0007669"/>
    <property type="project" value="InterPro"/>
</dbReference>
<dbReference type="GO" id="GO:0097216">
    <property type="term" value="F:guanosine tetraphosphate binding"/>
    <property type="evidence" value="ECO:0007669"/>
    <property type="project" value="UniProtKB-ARBA"/>
</dbReference>
<dbReference type="GO" id="GO:0003746">
    <property type="term" value="F:translation elongation factor activity"/>
    <property type="evidence" value="ECO:0007669"/>
    <property type="project" value="UniProtKB-UniRule"/>
</dbReference>
<dbReference type="GO" id="GO:0032790">
    <property type="term" value="P:ribosome disassembly"/>
    <property type="evidence" value="ECO:0007669"/>
    <property type="project" value="TreeGrafter"/>
</dbReference>
<dbReference type="CDD" id="cd01886">
    <property type="entry name" value="EF-G"/>
    <property type="match status" value="1"/>
</dbReference>
<dbReference type="CDD" id="cd16262">
    <property type="entry name" value="EFG_III"/>
    <property type="match status" value="1"/>
</dbReference>
<dbReference type="CDD" id="cd01434">
    <property type="entry name" value="EFG_mtEFG1_IV"/>
    <property type="match status" value="1"/>
</dbReference>
<dbReference type="CDD" id="cd03713">
    <property type="entry name" value="EFG_mtEFG_C"/>
    <property type="match status" value="1"/>
</dbReference>
<dbReference type="CDD" id="cd04088">
    <property type="entry name" value="EFG_mtEFG_II"/>
    <property type="match status" value="1"/>
</dbReference>
<dbReference type="FunFam" id="2.40.30.10:FF:000006">
    <property type="entry name" value="Elongation factor G"/>
    <property type="match status" value="1"/>
</dbReference>
<dbReference type="FunFam" id="3.30.230.10:FF:000003">
    <property type="entry name" value="Elongation factor G"/>
    <property type="match status" value="1"/>
</dbReference>
<dbReference type="FunFam" id="3.30.70.240:FF:000001">
    <property type="entry name" value="Elongation factor G"/>
    <property type="match status" value="1"/>
</dbReference>
<dbReference type="FunFam" id="3.30.70.870:FF:000001">
    <property type="entry name" value="Elongation factor G"/>
    <property type="match status" value="1"/>
</dbReference>
<dbReference type="FunFam" id="3.40.50.300:FF:000029">
    <property type="entry name" value="Elongation factor G"/>
    <property type="match status" value="1"/>
</dbReference>
<dbReference type="Gene3D" id="3.30.230.10">
    <property type="match status" value="1"/>
</dbReference>
<dbReference type="Gene3D" id="3.30.70.240">
    <property type="match status" value="1"/>
</dbReference>
<dbReference type="Gene3D" id="3.30.70.870">
    <property type="entry name" value="Elongation Factor G (Translational Gtpase), domain 3"/>
    <property type="match status" value="1"/>
</dbReference>
<dbReference type="Gene3D" id="3.40.50.300">
    <property type="entry name" value="P-loop containing nucleotide triphosphate hydrolases"/>
    <property type="match status" value="1"/>
</dbReference>
<dbReference type="Gene3D" id="2.40.30.10">
    <property type="entry name" value="Translation factors"/>
    <property type="match status" value="1"/>
</dbReference>
<dbReference type="HAMAP" id="MF_00054_B">
    <property type="entry name" value="EF_G_EF_2_B"/>
    <property type="match status" value="1"/>
</dbReference>
<dbReference type="InterPro" id="IPR041095">
    <property type="entry name" value="EFG_II"/>
</dbReference>
<dbReference type="InterPro" id="IPR009022">
    <property type="entry name" value="EFG_III"/>
</dbReference>
<dbReference type="InterPro" id="IPR035647">
    <property type="entry name" value="EFG_III/V"/>
</dbReference>
<dbReference type="InterPro" id="IPR047872">
    <property type="entry name" value="EFG_IV"/>
</dbReference>
<dbReference type="InterPro" id="IPR035649">
    <property type="entry name" value="EFG_V"/>
</dbReference>
<dbReference type="InterPro" id="IPR000640">
    <property type="entry name" value="EFG_V-like"/>
</dbReference>
<dbReference type="InterPro" id="IPR004161">
    <property type="entry name" value="EFTu-like_2"/>
</dbReference>
<dbReference type="InterPro" id="IPR031157">
    <property type="entry name" value="G_TR_CS"/>
</dbReference>
<dbReference type="InterPro" id="IPR027417">
    <property type="entry name" value="P-loop_NTPase"/>
</dbReference>
<dbReference type="InterPro" id="IPR020568">
    <property type="entry name" value="Ribosomal_Su5_D2-typ_SF"/>
</dbReference>
<dbReference type="InterPro" id="IPR014721">
    <property type="entry name" value="Ribsml_uS5_D2-typ_fold_subgr"/>
</dbReference>
<dbReference type="InterPro" id="IPR005225">
    <property type="entry name" value="Small_GTP-bd"/>
</dbReference>
<dbReference type="InterPro" id="IPR000795">
    <property type="entry name" value="T_Tr_GTP-bd_dom"/>
</dbReference>
<dbReference type="InterPro" id="IPR009000">
    <property type="entry name" value="Transl_B-barrel_sf"/>
</dbReference>
<dbReference type="InterPro" id="IPR004540">
    <property type="entry name" value="Transl_elong_EFG/EF2"/>
</dbReference>
<dbReference type="InterPro" id="IPR005517">
    <property type="entry name" value="Transl_elong_EFG/EF2_IV"/>
</dbReference>
<dbReference type="NCBIfam" id="TIGR00484">
    <property type="entry name" value="EF-G"/>
    <property type="match status" value="1"/>
</dbReference>
<dbReference type="NCBIfam" id="NF009381">
    <property type="entry name" value="PRK12740.1-5"/>
    <property type="match status" value="1"/>
</dbReference>
<dbReference type="NCBIfam" id="TIGR00231">
    <property type="entry name" value="small_GTP"/>
    <property type="match status" value="1"/>
</dbReference>
<dbReference type="PANTHER" id="PTHR43261:SF1">
    <property type="entry name" value="RIBOSOME-RELEASING FACTOR 2, MITOCHONDRIAL"/>
    <property type="match status" value="1"/>
</dbReference>
<dbReference type="PANTHER" id="PTHR43261">
    <property type="entry name" value="TRANSLATION ELONGATION FACTOR G-RELATED"/>
    <property type="match status" value="1"/>
</dbReference>
<dbReference type="Pfam" id="PF00679">
    <property type="entry name" value="EFG_C"/>
    <property type="match status" value="1"/>
</dbReference>
<dbReference type="Pfam" id="PF14492">
    <property type="entry name" value="EFG_III"/>
    <property type="match status" value="1"/>
</dbReference>
<dbReference type="Pfam" id="PF03764">
    <property type="entry name" value="EFG_IV"/>
    <property type="match status" value="1"/>
</dbReference>
<dbReference type="Pfam" id="PF00009">
    <property type="entry name" value="GTP_EFTU"/>
    <property type="match status" value="1"/>
</dbReference>
<dbReference type="Pfam" id="PF03144">
    <property type="entry name" value="GTP_EFTU_D2"/>
    <property type="match status" value="1"/>
</dbReference>
<dbReference type="PRINTS" id="PR00315">
    <property type="entry name" value="ELONGATNFCT"/>
</dbReference>
<dbReference type="SMART" id="SM00838">
    <property type="entry name" value="EFG_C"/>
    <property type="match status" value="1"/>
</dbReference>
<dbReference type="SMART" id="SM00889">
    <property type="entry name" value="EFG_IV"/>
    <property type="match status" value="1"/>
</dbReference>
<dbReference type="SUPFAM" id="SSF54980">
    <property type="entry name" value="EF-G C-terminal domain-like"/>
    <property type="match status" value="2"/>
</dbReference>
<dbReference type="SUPFAM" id="SSF52540">
    <property type="entry name" value="P-loop containing nucleoside triphosphate hydrolases"/>
    <property type="match status" value="1"/>
</dbReference>
<dbReference type="SUPFAM" id="SSF54211">
    <property type="entry name" value="Ribosomal protein S5 domain 2-like"/>
    <property type="match status" value="1"/>
</dbReference>
<dbReference type="SUPFAM" id="SSF50447">
    <property type="entry name" value="Translation proteins"/>
    <property type="match status" value="1"/>
</dbReference>
<dbReference type="PROSITE" id="PS00301">
    <property type="entry name" value="G_TR_1"/>
    <property type="match status" value="1"/>
</dbReference>
<dbReference type="PROSITE" id="PS51722">
    <property type="entry name" value="G_TR_2"/>
    <property type="match status" value="1"/>
</dbReference>
<accession>B7LS46</accession>
<feature type="chain" id="PRO_1000201465" description="Elongation factor G">
    <location>
        <begin position="1"/>
        <end position="704"/>
    </location>
</feature>
<feature type="domain" description="tr-type G">
    <location>
        <begin position="8"/>
        <end position="290"/>
    </location>
</feature>
<feature type="binding site" evidence="2">
    <location>
        <begin position="17"/>
        <end position="24"/>
    </location>
    <ligand>
        <name>GTP</name>
        <dbReference type="ChEBI" id="CHEBI:37565"/>
    </ligand>
</feature>
<feature type="binding site" evidence="2">
    <location>
        <begin position="88"/>
        <end position="92"/>
    </location>
    <ligand>
        <name>GTP</name>
        <dbReference type="ChEBI" id="CHEBI:37565"/>
    </ligand>
</feature>
<feature type="binding site" evidence="2">
    <location>
        <begin position="142"/>
        <end position="145"/>
    </location>
    <ligand>
        <name>GTP</name>
        <dbReference type="ChEBI" id="CHEBI:37565"/>
    </ligand>
</feature>
<feature type="modified residue" description="N6-acetyllysine" evidence="1">
    <location>
        <position position="504"/>
    </location>
</feature>
<feature type="modified residue" description="N6-acetyllysine" evidence="1">
    <location>
        <position position="643"/>
    </location>
</feature>
<name>EFG_ESCF3</name>
<protein>
    <recommendedName>
        <fullName evidence="2">Elongation factor G</fullName>
        <shortName evidence="2">EF-G</shortName>
    </recommendedName>
</protein>
<gene>
    <name evidence="2" type="primary">fusA</name>
    <name type="ordered locus">EFER_3310</name>
</gene>
<comment type="function">
    <text evidence="2">Catalyzes the GTP-dependent ribosomal translocation step during translation elongation. During this step, the ribosome changes from the pre-translocational (PRE) to the post-translocational (POST) state as the newly formed A-site-bound peptidyl-tRNA and P-site-bound deacylated tRNA move to the P and E sites, respectively. Catalyzes the coordinated movement of the two tRNA molecules, the mRNA and conformational changes in the ribosome.</text>
</comment>
<comment type="subcellular location">
    <subcellularLocation>
        <location evidence="2">Cytoplasm</location>
    </subcellularLocation>
</comment>
<comment type="similarity">
    <text evidence="2">Belongs to the TRAFAC class translation factor GTPase superfamily. Classic translation factor GTPase family. EF-G/EF-2 subfamily.</text>
</comment>
<evidence type="ECO:0000250" key="1"/>
<evidence type="ECO:0000255" key="2">
    <source>
        <dbReference type="HAMAP-Rule" id="MF_00054"/>
    </source>
</evidence>
<reference key="1">
    <citation type="journal article" date="2009" name="PLoS Genet.">
        <title>Organised genome dynamics in the Escherichia coli species results in highly diverse adaptive paths.</title>
        <authorList>
            <person name="Touchon M."/>
            <person name="Hoede C."/>
            <person name="Tenaillon O."/>
            <person name="Barbe V."/>
            <person name="Baeriswyl S."/>
            <person name="Bidet P."/>
            <person name="Bingen E."/>
            <person name="Bonacorsi S."/>
            <person name="Bouchier C."/>
            <person name="Bouvet O."/>
            <person name="Calteau A."/>
            <person name="Chiapello H."/>
            <person name="Clermont O."/>
            <person name="Cruveiller S."/>
            <person name="Danchin A."/>
            <person name="Diard M."/>
            <person name="Dossat C."/>
            <person name="Karoui M.E."/>
            <person name="Frapy E."/>
            <person name="Garry L."/>
            <person name="Ghigo J.M."/>
            <person name="Gilles A.M."/>
            <person name="Johnson J."/>
            <person name="Le Bouguenec C."/>
            <person name="Lescat M."/>
            <person name="Mangenot S."/>
            <person name="Martinez-Jehanne V."/>
            <person name="Matic I."/>
            <person name="Nassif X."/>
            <person name="Oztas S."/>
            <person name="Petit M.A."/>
            <person name="Pichon C."/>
            <person name="Rouy Z."/>
            <person name="Ruf C.S."/>
            <person name="Schneider D."/>
            <person name="Tourret J."/>
            <person name="Vacherie B."/>
            <person name="Vallenet D."/>
            <person name="Medigue C."/>
            <person name="Rocha E.P.C."/>
            <person name="Denamur E."/>
        </authorList>
    </citation>
    <scope>NUCLEOTIDE SEQUENCE [LARGE SCALE GENOMIC DNA]</scope>
    <source>
        <strain>ATCC 35469 / DSM 13698 / BCRC 15582 / CCUG 18766 / IAM 14443 / JCM 21226 / LMG 7866 / NBRC 102419 / NCTC 12128 / CDC 0568-73</strain>
    </source>
</reference>
<keyword id="KW-0007">Acetylation</keyword>
<keyword id="KW-0963">Cytoplasm</keyword>
<keyword id="KW-0251">Elongation factor</keyword>
<keyword id="KW-0342">GTP-binding</keyword>
<keyword id="KW-0547">Nucleotide-binding</keyword>
<keyword id="KW-0648">Protein biosynthesis</keyword>